<gene>
    <name evidence="1" type="primary">rpsF</name>
    <name type="ordered locus">RF_0143</name>
</gene>
<proteinExistence type="inferred from homology"/>
<dbReference type="EMBL" id="CP000053">
    <property type="protein sequence ID" value="AAY60994.1"/>
    <property type="status" value="ALT_INIT"/>
    <property type="molecule type" value="Genomic_DNA"/>
</dbReference>
<dbReference type="SMR" id="Q4UN64"/>
<dbReference type="STRING" id="315456.RF_0143"/>
<dbReference type="KEGG" id="rfe:RF_0143"/>
<dbReference type="eggNOG" id="COG0360">
    <property type="taxonomic scope" value="Bacteria"/>
</dbReference>
<dbReference type="HOGENOM" id="CLU_113441_2_0_5"/>
<dbReference type="OrthoDB" id="9812702at2"/>
<dbReference type="Proteomes" id="UP000008548">
    <property type="component" value="Chromosome"/>
</dbReference>
<dbReference type="GO" id="GO:0005737">
    <property type="term" value="C:cytoplasm"/>
    <property type="evidence" value="ECO:0007669"/>
    <property type="project" value="UniProtKB-ARBA"/>
</dbReference>
<dbReference type="GO" id="GO:1990904">
    <property type="term" value="C:ribonucleoprotein complex"/>
    <property type="evidence" value="ECO:0007669"/>
    <property type="project" value="UniProtKB-KW"/>
</dbReference>
<dbReference type="GO" id="GO:0005840">
    <property type="term" value="C:ribosome"/>
    <property type="evidence" value="ECO:0007669"/>
    <property type="project" value="UniProtKB-KW"/>
</dbReference>
<dbReference type="GO" id="GO:0070181">
    <property type="term" value="F:small ribosomal subunit rRNA binding"/>
    <property type="evidence" value="ECO:0007669"/>
    <property type="project" value="TreeGrafter"/>
</dbReference>
<dbReference type="GO" id="GO:0003735">
    <property type="term" value="F:structural constituent of ribosome"/>
    <property type="evidence" value="ECO:0007669"/>
    <property type="project" value="InterPro"/>
</dbReference>
<dbReference type="GO" id="GO:0006412">
    <property type="term" value="P:translation"/>
    <property type="evidence" value="ECO:0007669"/>
    <property type="project" value="UniProtKB-UniRule"/>
</dbReference>
<dbReference type="CDD" id="cd00473">
    <property type="entry name" value="bS6"/>
    <property type="match status" value="1"/>
</dbReference>
<dbReference type="Gene3D" id="3.30.70.60">
    <property type="match status" value="1"/>
</dbReference>
<dbReference type="HAMAP" id="MF_00360">
    <property type="entry name" value="Ribosomal_bS6"/>
    <property type="match status" value="1"/>
</dbReference>
<dbReference type="InterPro" id="IPR000529">
    <property type="entry name" value="Ribosomal_bS6"/>
</dbReference>
<dbReference type="InterPro" id="IPR035980">
    <property type="entry name" value="Ribosomal_bS6_sf"/>
</dbReference>
<dbReference type="InterPro" id="IPR020814">
    <property type="entry name" value="Ribosomal_S6_plastid/chlpt"/>
</dbReference>
<dbReference type="InterPro" id="IPR014717">
    <property type="entry name" value="Transl_elong_EF1B/ribsomal_bS6"/>
</dbReference>
<dbReference type="NCBIfam" id="TIGR00166">
    <property type="entry name" value="S6"/>
    <property type="match status" value="1"/>
</dbReference>
<dbReference type="PANTHER" id="PTHR21011">
    <property type="entry name" value="MITOCHONDRIAL 28S RIBOSOMAL PROTEIN S6"/>
    <property type="match status" value="1"/>
</dbReference>
<dbReference type="PANTHER" id="PTHR21011:SF1">
    <property type="entry name" value="SMALL RIBOSOMAL SUBUNIT PROTEIN BS6M"/>
    <property type="match status" value="1"/>
</dbReference>
<dbReference type="Pfam" id="PF01250">
    <property type="entry name" value="Ribosomal_S6"/>
    <property type="match status" value="1"/>
</dbReference>
<dbReference type="SUPFAM" id="SSF54995">
    <property type="entry name" value="Ribosomal protein S6"/>
    <property type="match status" value="1"/>
</dbReference>
<protein>
    <recommendedName>
        <fullName evidence="1">Small ribosomal subunit protein bS6</fullName>
    </recommendedName>
    <alternativeName>
        <fullName evidence="2">30S ribosomal protein S6</fullName>
    </alternativeName>
</protein>
<accession>Q4UN64</accession>
<evidence type="ECO:0000255" key="1">
    <source>
        <dbReference type="HAMAP-Rule" id="MF_00360"/>
    </source>
</evidence>
<evidence type="ECO:0000305" key="2"/>
<reference key="1">
    <citation type="journal article" date="2005" name="PLoS Biol.">
        <title>The genome sequence of Rickettsia felis identifies the first putative conjugative plasmid in an obligate intracellular parasite.</title>
        <authorList>
            <person name="Ogata H."/>
            <person name="Renesto P."/>
            <person name="Audic S."/>
            <person name="Robert C."/>
            <person name="Blanc G."/>
            <person name="Fournier P.-E."/>
            <person name="Parinello H."/>
            <person name="Claverie J.-M."/>
            <person name="Raoult D."/>
        </authorList>
    </citation>
    <scope>NUCLEOTIDE SEQUENCE [LARGE SCALE GENOMIC DNA]</scope>
    <source>
        <strain>ATCC VR-1525 / URRWXCal2</strain>
    </source>
</reference>
<name>RS6_RICFE</name>
<organism>
    <name type="scientific">Rickettsia felis (strain ATCC VR-1525 / URRWXCal2)</name>
    <name type="common">Rickettsia azadi</name>
    <dbReference type="NCBI Taxonomy" id="315456"/>
    <lineage>
        <taxon>Bacteria</taxon>
        <taxon>Pseudomonadati</taxon>
        <taxon>Pseudomonadota</taxon>
        <taxon>Alphaproteobacteria</taxon>
        <taxon>Rickettsiales</taxon>
        <taxon>Rickettsiaceae</taxon>
        <taxon>Rickettsieae</taxon>
        <taxon>Rickettsia</taxon>
        <taxon>spotted fever group</taxon>
    </lineage>
</organism>
<sequence length="121" mass="13946">MSFYESVFIIRQDVSLNDIDKIVDDFAKIIKDNNGTIVKKEYWGLRTLAYKIGNNKKGHYYFLGLDITGNVKEELERKMKLNENIIRFLTIKADSISSEPSQILKNQSTENTPVIDVTINN</sequence>
<keyword id="KW-0687">Ribonucleoprotein</keyword>
<keyword id="KW-0689">Ribosomal protein</keyword>
<keyword id="KW-0694">RNA-binding</keyword>
<keyword id="KW-0699">rRNA-binding</keyword>
<comment type="function">
    <text evidence="1">Binds together with bS18 to 16S ribosomal RNA.</text>
</comment>
<comment type="similarity">
    <text evidence="1">Belongs to the bacterial ribosomal protein bS6 family.</text>
</comment>
<comment type="sequence caution" evidence="2">
    <conflict type="erroneous initiation">
        <sequence resource="EMBL-CDS" id="AAY60994"/>
    </conflict>
</comment>
<feature type="chain" id="PRO_0000229573" description="Small ribosomal subunit protein bS6">
    <location>
        <begin position="1"/>
        <end position="121"/>
    </location>
</feature>